<protein>
    <recommendedName>
        <fullName evidence="1">Endonuclease MutS2</fullName>
        <ecNumber evidence="1">3.1.-.-</ecNumber>
    </recommendedName>
    <alternativeName>
        <fullName evidence="1">Ribosome-associated protein quality control-upstream factor</fullName>
        <shortName evidence="1">RQC-upstream factor</shortName>
        <shortName evidence="1">RqcU</shortName>
        <ecNumber evidence="1">3.6.4.-</ecNumber>
    </alternativeName>
</protein>
<accession>Q03AZ5</accession>
<gene>
    <name evidence="1" type="primary">mutS2</name>
    <name evidence="1" type="synonym">rqcU</name>
    <name type="ordered locus">LSEI_0791</name>
</gene>
<evidence type="ECO:0000255" key="1">
    <source>
        <dbReference type="HAMAP-Rule" id="MF_00092"/>
    </source>
</evidence>
<feature type="chain" id="PRO_1000093362" description="Endonuclease MutS2">
    <location>
        <begin position="1"/>
        <end position="786"/>
    </location>
</feature>
<feature type="domain" description="Smr" evidence="1">
    <location>
        <begin position="711"/>
        <end position="786"/>
    </location>
</feature>
<feature type="binding site" evidence="1">
    <location>
        <begin position="333"/>
        <end position="340"/>
    </location>
    <ligand>
        <name>ATP</name>
        <dbReference type="ChEBI" id="CHEBI:30616"/>
    </ligand>
</feature>
<sequence>MNEKILKTLEYDKIQQALLGQVVTANGRQLVQAMQPLTDPVAVQQALDETADGASALRLKGGIPVPQLENIDPALKRVDIGAVLNGQELASISRVLQTVSAIDKFLTDLQDQIDFRQLYTLQESLTVLPQLSRRLKTAVDPDGTLTDEASPQLHGVREQIKSIEGEIRGKMTNYTRGAQSKYLSDPIVTIRDDRYVIPVKAEYRAKFGGVVHDQSATGQTLFIEPQAIVALNNRLREAQLAEVAEINRILAELSNELAPYTGQIKANAAVLGHFDFINAKARLAKAEKATEPLVSADNDVLLRDARHPLIDPHKVVGNDIPLGDKYQAMVITGPNTGGKTITLKTLGLLQLMGQSGLFIPADDESRIGIFDEVFADIGDEQSIEQNLSTFSAHMDNIVHILKQLSQNSLVLFDELGAGTDPQEGAALAIAILDAVGEVGAYVVATTHYPELKLYGYNTAKTINASMEFDSKTLQPTYRLLVGVPGRSNAFDISARLGLPGVIVERAKSMISSDSHELNNMISDLEKQRKAAETAYEAARRQLADAQSVHDELAAAYKKFTTERDAQLQQAKDKANTLVDKAQTKADKIIKQLRQMQLTNPGTVKENQLIAAKTALKQLHQDEPLQKNRILRREREKQALHVGDEVKVASYDQTGTLLEQFDKKHWQVQLGILKMKVPTDELKKIKSSKQSAAQRPVVKVSGGGMSGPSTTLDLRGERYDQAMADLDQYIDAALLAGYPSVTIIHGLGTGAIRNGVTQYLKRNRQVKTYGFAPQNAGGSGATIVNFK</sequence>
<reference key="1">
    <citation type="journal article" date="2006" name="Proc. Natl. Acad. Sci. U.S.A.">
        <title>Comparative genomics of the lactic acid bacteria.</title>
        <authorList>
            <person name="Makarova K.S."/>
            <person name="Slesarev A."/>
            <person name="Wolf Y.I."/>
            <person name="Sorokin A."/>
            <person name="Mirkin B."/>
            <person name="Koonin E.V."/>
            <person name="Pavlov A."/>
            <person name="Pavlova N."/>
            <person name="Karamychev V."/>
            <person name="Polouchine N."/>
            <person name="Shakhova V."/>
            <person name="Grigoriev I."/>
            <person name="Lou Y."/>
            <person name="Rohksar D."/>
            <person name="Lucas S."/>
            <person name="Huang K."/>
            <person name="Goodstein D.M."/>
            <person name="Hawkins T."/>
            <person name="Plengvidhya V."/>
            <person name="Welker D."/>
            <person name="Hughes J."/>
            <person name="Goh Y."/>
            <person name="Benson A."/>
            <person name="Baldwin K."/>
            <person name="Lee J.-H."/>
            <person name="Diaz-Muniz I."/>
            <person name="Dosti B."/>
            <person name="Smeianov V."/>
            <person name="Wechter W."/>
            <person name="Barabote R."/>
            <person name="Lorca G."/>
            <person name="Altermann E."/>
            <person name="Barrangou R."/>
            <person name="Ganesan B."/>
            <person name="Xie Y."/>
            <person name="Rawsthorne H."/>
            <person name="Tamir D."/>
            <person name="Parker C."/>
            <person name="Breidt F."/>
            <person name="Broadbent J.R."/>
            <person name="Hutkins R."/>
            <person name="O'Sullivan D."/>
            <person name="Steele J."/>
            <person name="Unlu G."/>
            <person name="Saier M.H. Jr."/>
            <person name="Klaenhammer T."/>
            <person name="Richardson P."/>
            <person name="Kozyavkin S."/>
            <person name="Weimer B.C."/>
            <person name="Mills D.A."/>
        </authorList>
    </citation>
    <scope>NUCLEOTIDE SEQUENCE [LARGE SCALE GENOMIC DNA]</scope>
    <source>
        <strain>ATCC 334 / BCRC 17002 / CCUG 31169 / CIP 107868 / KCTC 3260 / NRRL B-441</strain>
    </source>
</reference>
<proteinExistence type="inferred from homology"/>
<organism>
    <name type="scientific">Lacticaseibacillus paracasei (strain ATCC 334 / BCRC 17002 / CCUG 31169 / CIP 107868 / KCTC 3260 / NRRL B-441)</name>
    <name type="common">Lactobacillus paracasei</name>
    <dbReference type="NCBI Taxonomy" id="321967"/>
    <lineage>
        <taxon>Bacteria</taxon>
        <taxon>Bacillati</taxon>
        <taxon>Bacillota</taxon>
        <taxon>Bacilli</taxon>
        <taxon>Lactobacillales</taxon>
        <taxon>Lactobacillaceae</taxon>
        <taxon>Lacticaseibacillus</taxon>
    </lineage>
</organism>
<name>MUTS2_LACP3</name>
<comment type="function">
    <text evidence="1">Endonuclease that is involved in the suppression of homologous recombination and thus may have a key role in the control of bacterial genetic diversity.</text>
</comment>
<comment type="function">
    <text evidence="1">Acts as a ribosome collision sensor, splitting the ribosome into its 2 subunits. Detects stalled/collided 70S ribosomes which it binds and splits by an ATP-hydrolysis driven conformational change. Acts upstream of the ribosome quality control system (RQC), a ribosome-associated complex that mediates the extraction of incompletely synthesized nascent chains from stalled ribosomes and their subsequent degradation. Probably generates substrates for RQC.</text>
</comment>
<comment type="subunit">
    <text evidence="1">Homodimer. Binds to stalled ribosomes, contacting rRNA.</text>
</comment>
<comment type="similarity">
    <text evidence="1">Belongs to the DNA mismatch repair MutS family. MutS2 subfamily.</text>
</comment>
<dbReference type="EC" id="3.1.-.-" evidence="1"/>
<dbReference type="EC" id="3.6.4.-" evidence="1"/>
<dbReference type="EMBL" id="CP000423">
    <property type="protein sequence ID" value="ABJ69627.1"/>
    <property type="molecule type" value="Genomic_DNA"/>
</dbReference>
<dbReference type="RefSeq" id="WP_011674280.1">
    <property type="nucleotide sequence ID" value="NC_008526.1"/>
</dbReference>
<dbReference type="RefSeq" id="YP_806069.1">
    <property type="nucleotide sequence ID" value="NC_008526.1"/>
</dbReference>
<dbReference type="SMR" id="Q03AZ5"/>
<dbReference type="STRING" id="321967.LSEI_0791"/>
<dbReference type="PaxDb" id="321967-LSEI_0791"/>
<dbReference type="KEGG" id="lca:LSEI_0791"/>
<dbReference type="PATRIC" id="fig|321967.11.peg.793"/>
<dbReference type="HOGENOM" id="CLU_011252_2_1_9"/>
<dbReference type="Proteomes" id="UP000001651">
    <property type="component" value="Chromosome"/>
</dbReference>
<dbReference type="GO" id="GO:0005524">
    <property type="term" value="F:ATP binding"/>
    <property type="evidence" value="ECO:0007669"/>
    <property type="project" value="UniProtKB-UniRule"/>
</dbReference>
<dbReference type="GO" id="GO:0016887">
    <property type="term" value="F:ATP hydrolysis activity"/>
    <property type="evidence" value="ECO:0007669"/>
    <property type="project" value="InterPro"/>
</dbReference>
<dbReference type="GO" id="GO:0140664">
    <property type="term" value="F:ATP-dependent DNA damage sensor activity"/>
    <property type="evidence" value="ECO:0007669"/>
    <property type="project" value="InterPro"/>
</dbReference>
<dbReference type="GO" id="GO:0004519">
    <property type="term" value="F:endonuclease activity"/>
    <property type="evidence" value="ECO:0007669"/>
    <property type="project" value="UniProtKB-UniRule"/>
</dbReference>
<dbReference type="GO" id="GO:0030983">
    <property type="term" value="F:mismatched DNA binding"/>
    <property type="evidence" value="ECO:0007669"/>
    <property type="project" value="InterPro"/>
</dbReference>
<dbReference type="GO" id="GO:0043023">
    <property type="term" value="F:ribosomal large subunit binding"/>
    <property type="evidence" value="ECO:0007669"/>
    <property type="project" value="UniProtKB-UniRule"/>
</dbReference>
<dbReference type="GO" id="GO:0019843">
    <property type="term" value="F:rRNA binding"/>
    <property type="evidence" value="ECO:0007669"/>
    <property type="project" value="UniProtKB-UniRule"/>
</dbReference>
<dbReference type="GO" id="GO:0006298">
    <property type="term" value="P:mismatch repair"/>
    <property type="evidence" value="ECO:0007669"/>
    <property type="project" value="InterPro"/>
</dbReference>
<dbReference type="GO" id="GO:0045910">
    <property type="term" value="P:negative regulation of DNA recombination"/>
    <property type="evidence" value="ECO:0007669"/>
    <property type="project" value="InterPro"/>
</dbReference>
<dbReference type="GO" id="GO:0072344">
    <property type="term" value="P:rescue of stalled ribosome"/>
    <property type="evidence" value="ECO:0007669"/>
    <property type="project" value="UniProtKB-UniRule"/>
</dbReference>
<dbReference type="FunFam" id="3.40.50.300:FF:000830">
    <property type="entry name" value="Endonuclease MutS2"/>
    <property type="match status" value="1"/>
</dbReference>
<dbReference type="Gene3D" id="3.30.1370.110">
    <property type="match status" value="1"/>
</dbReference>
<dbReference type="Gene3D" id="3.40.50.300">
    <property type="entry name" value="P-loop containing nucleotide triphosphate hydrolases"/>
    <property type="match status" value="1"/>
</dbReference>
<dbReference type="HAMAP" id="MF_00092">
    <property type="entry name" value="MutS2"/>
    <property type="match status" value="1"/>
</dbReference>
<dbReference type="InterPro" id="IPR000432">
    <property type="entry name" value="DNA_mismatch_repair_MutS_C"/>
</dbReference>
<dbReference type="InterPro" id="IPR007696">
    <property type="entry name" value="DNA_mismatch_repair_MutS_core"/>
</dbReference>
<dbReference type="InterPro" id="IPR036187">
    <property type="entry name" value="DNA_mismatch_repair_MutS_sf"/>
</dbReference>
<dbReference type="InterPro" id="IPR046893">
    <property type="entry name" value="MSSS"/>
</dbReference>
<dbReference type="InterPro" id="IPR045076">
    <property type="entry name" value="MutS"/>
</dbReference>
<dbReference type="InterPro" id="IPR005747">
    <property type="entry name" value="MutS2"/>
</dbReference>
<dbReference type="InterPro" id="IPR027417">
    <property type="entry name" value="P-loop_NTPase"/>
</dbReference>
<dbReference type="InterPro" id="IPR002625">
    <property type="entry name" value="Smr_dom"/>
</dbReference>
<dbReference type="InterPro" id="IPR036063">
    <property type="entry name" value="Smr_dom_sf"/>
</dbReference>
<dbReference type="NCBIfam" id="TIGR01069">
    <property type="entry name" value="mutS2"/>
    <property type="match status" value="1"/>
</dbReference>
<dbReference type="PANTHER" id="PTHR48466:SF2">
    <property type="entry name" value="OS10G0509000 PROTEIN"/>
    <property type="match status" value="1"/>
</dbReference>
<dbReference type="PANTHER" id="PTHR48466">
    <property type="entry name" value="OS10G0509000 PROTEIN-RELATED"/>
    <property type="match status" value="1"/>
</dbReference>
<dbReference type="Pfam" id="PF20297">
    <property type="entry name" value="MSSS"/>
    <property type="match status" value="1"/>
</dbReference>
<dbReference type="Pfam" id="PF00488">
    <property type="entry name" value="MutS_V"/>
    <property type="match status" value="1"/>
</dbReference>
<dbReference type="Pfam" id="PF01713">
    <property type="entry name" value="Smr"/>
    <property type="match status" value="1"/>
</dbReference>
<dbReference type="PIRSF" id="PIRSF005814">
    <property type="entry name" value="MutS_YshD"/>
    <property type="match status" value="1"/>
</dbReference>
<dbReference type="SMART" id="SM00534">
    <property type="entry name" value="MUTSac"/>
    <property type="match status" value="1"/>
</dbReference>
<dbReference type="SMART" id="SM00533">
    <property type="entry name" value="MUTSd"/>
    <property type="match status" value="1"/>
</dbReference>
<dbReference type="SMART" id="SM00463">
    <property type="entry name" value="SMR"/>
    <property type="match status" value="1"/>
</dbReference>
<dbReference type="SUPFAM" id="SSF48334">
    <property type="entry name" value="DNA repair protein MutS, domain III"/>
    <property type="match status" value="1"/>
</dbReference>
<dbReference type="SUPFAM" id="SSF52540">
    <property type="entry name" value="P-loop containing nucleoside triphosphate hydrolases"/>
    <property type="match status" value="1"/>
</dbReference>
<dbReference type="SUPFAM" id="SSF160443">
    <property type="entry name" value="SMR domain-like"/>
    <property type="match status" value="1"/>
</dbReference>
<dbReference type="PROSITE" id="PS00486">
    <property type="entry name" value="DNA_MISMATCH_REPAIR_2"/>
    <property type="match status" value="1"/>
</dbReference>
<dbReference type="PROSITE" id="PS50828">
    <property type="entry name" value="SMR"/>
    <property type="match status" value="1"/>
</dbReference>
<keyword id="KW-0067">ATP-binding</keyword>
<keyword id="KW-0238">DNA-binding</keyword>
<keyword id="KW-0255">Endonuclease</keyword>
<keyword id="KW-0378">Hydrolase</keyword>
<keyword id="KW-0540">Nuclease</keyword>
<keyword id="KW-0547">Nucleotide-binding</keyword>
<keyword id="KW-1185">Reference proteome</keyword>
<keyword id="KW-0694">RNA-binding</keyword>
<keyword id="KW-0699">rRNA-binding</keyword>